<sequence length="757" mass="85335">MMRGFKQRLIKKTTGSSSSSSSKKKDKEKEKEKSSTTSSTSKKPASASSSSHGTTHSSASSTGSKSTTEKGKQSGSVPSQGKHHSSSTSKTKTATTPSSSSSSSRSSSVSRSGSSSTKKTSSRKGQEQSKQSQQPSQSQKQGSSSSSAAIMNPTPVLTVTKDDKSTSGEDHAHPTLLGAVSAVPSSPISNASGTAVSSDVENGNSNNNNMNINTSNTQDANHASSQSIDIPRSSHSFERLPTPTKLNPDTDLELIKTPQRHSSSRFEPSRYTPLTKLPNFNEVSPEERIPLFIAKVDQCNTMFDFNDPSFDIQGKEIKRSTLDELIEFLVTNRFTYTNEMYAHVVNMFKINLFRPIPPPVNPVGDIYDPDEDEPVNELAWPHMQAVYEFFLRFVESPDFNHQIAKQYIDQDFILKLLELFDSEDIRERDCLKTTLHRIYGKFLSLRSFIRRSMNNIFLQFIYETEKFNGVAELLEILGSIINGFALPLKEEHKVFLVRILIPLHKVRCLSLYHPQLAYCIVQFLEKDPLLTEEVVMGLLRYWPKINSTKEIMFLNEIEDIFEVIEPLEFIKVEVPLFVQLAKCISSPHFQVAEKVLSYWNNEYFLNLCIENAEVILPIIFPALYELTSQLELDTANGEDSISDPYMLVEQAINSGSWNRAIHAMAFKALKIFLETNPVLYENCNALYLSSVKETQQRKVQREENWSKLEEYVKNLRINNDKDQYTIKNPELRNSFNTASENNTLNEENENDCDSEIQ</sequence>
<organism>
    <name type="scientific">Saccharomyces cerevisiae (strain ATCC 204508 / S288c)</name>
    <name type="common">Baker's yeast</name>
    <dbReference type="NCBI Taxonomy" id="559292"/>
    <lineage>
        <taxon>Eukaryota</taxon>
        <taxon>Fungi</taxon>
        <taxon>Dikarya</taxon>
        <taxon>Ascomycota</taxon>
        <taxon>Saccharomycotina</taxon>
        <taxon>Saccharomycetes</taxon>
        <taxon>Saccharomycetales</taxon>
        <taxon>Saccharomycetaceae</taxon>
        <taxon>Saccharomyces</taxon>
    </lineage>
</organism>
<feature type="chain" id="PRO_0000071471" description="Serine/threonine-protein phosphatase 2A 56 kDa regulatory subunit delta isoform">
    <location>
        <begin position="1"/>
        <end position="757"/>
    </location>
</feature>
<feature type="region of interest" description="Disordered" evidence="1">
    <location>
        <begin position="1"/>
        <end position="172"/>
    </location>
</feature>
<feature type="region of interest" description="Disordered" evidence="1">
    <location>
        <begin position="188"/>
        <end position="250"/>
    </location>
</feature>
<feature type="region of interest" description="Disordered" evidence="1">
    <location>
        <begin position="734"/>
        <end position="757"/>
    </location>
</feature>
<feature type="compositionally biased region" description="Basic residues" evidence="1">
    <location>
        <begin position="1"/>
        <end position="11"/>
    </location>
</feature>
<feature type="compositionally biased region" description="Low complexity" evidence="1">
    <location>
        <begin position="12"/>
        <end position="21"/>
    </location>
</feature>
<feature type="compositionally biased region" description="Basic and acidic residues" evidence="1">
    <location>
        <begin position="23"/>
        <end position="34"/>
    </location>
</feature>
<feature type="compositionally biased region" description="Low complexity" evidence="1">
    <location>
        <begin position="35"/>
        <end position="66"/>
    </location>
</feature>
<feature type="compositionally biased region" description="Low complexity" evidence="1">
    <location>
        <begin position="86"/>
        <end position="119"/>
    </location>
</feature>
<feature type="compositionally biased region" description="Low complexity" evidence="1">
    <location>
        <begin position="128"/>
        <end position="147"/>
    </location>
</feature>
<feature type="compositionally biased region" description="Basic and acidic residues" evidence="1">
    <location>
        <begin position="160"/>
        <end position="172"/>
    </location>
</feature>
<feature type="compositionally biased region" description="Low complexity" evidence="1">
    <location>
        <begin position="197"/>
        <end position="216"/>
    </location>
</feature>
<feature type="compositionally biased region" description="Polar residues" evidence="1">
    <location>
        <begin position="217"/>
        <end position="228"/>
    </location>
</feature>
<feature type="compositionally biased region" description="Acidic residues" evidence="1">
    <location>
        <begin position="746"/>
        <end position="757"/>
    </location>
</feature>
<feature type="modified residue" description="Phosphothreonine" evidence="6">
    <location>
        <position position="242"/>
    </location>
</feature>
<feature type="modified residue" description="Phosphothreonine" evidence="7">
    <location>
        <position position="257"/>
    </location>
</feature>
<feature type="sequence conflict" description="In Ref. 2; AAB35312." evidence="5" ref="2">
    <original>T</original>
    <variation>S</variation>
    <location>
        <position position="95"/>
    </location>
</feature>
<feature type="sequence conflict" description="In Ref. 1; AAB38372." evidence="5" ref="1">
    <original>L</original>
    <variation>F</variation>
    <location>
        <position position="529"/>
    </location>
</feature>
<feature type="sequence conflict" description="In Ref. 1; AAB38372." evidence="5" ref="1">
    <original>A</original>
    <variation>R</variation>
    <location>
        <position position="581"/>
    </location>
</feature>
<protein>
    <recommendedName>
        <fullName>Serine/threonine-protein phosphatase 2A 56 kDa regulatory subunit delta isoform</fullName>
    </recommendedName>
    <alternativeName>
        <fullName>PP2A, B subunit, B' delta isoform</fullName>
    </alternativeName>
    <alternativeName>
        <fullName>Protein RTS1</fullName>
    </alternativeName>
    <alternativeName>
        <fullName>Protein SCS1</fullName>
    </alternativeName>
</protein>
<reference key="1">
    <citation type="journal article" date="1996" name="Genetics">
        <title>Rox3 and Rts1 function in the global stress response pathway in baker's yeast.</title>
        <authorList>
            <person name="Evangelista C.C. Jr."/>
            <person name="Rodriguez Torres A.M."/>
            <person name="Limbach M.P."/>
            <person name="Zitomer R.S."/>
        </authorList>
    </citation>
    <scope>NUCLEOTIDE SEQUENCE [GENOMIC DNA]</scope>
</reference>
<reference key="2">
    <citation type="journal article" date="1995" name="Mol. Cell. Biol.">
        <title>SCS1, a multicopy suppressor of hsp60-ts mutant alleles, does not encode a mitochondrially targeted protein.</title>
        <authorList>
            <person name="Shu Y."/>
            <person name="Hallberg R.L."/>
        </authorList>
    </citation>
    <scope>NUCLEOTIDE SEQUENCE [GENOMIC DNA]</scope>
    <scope>SUBCELLULAR LOCATION</scope>
</reference>
<reference key="3">
    <citation type="journal article" date="1997" name="Nature">
        <title>The nucleotide sequence of Saccharomyces cerevisiae chromosome XV.</title>
        <authorList>
            <person name="Dujon B."/>
            <person name="Albermann K."/>
            <person name="Aldea M."/>
            <person name="Alexandraki D."/>
            <person name="Ansorge W."/>
            <person name="Arino J."/>
            <person name="Benes V."/>
            <person name="Bohn C."/>
            <person name="Bolotin-Fukuhara M."/>
            <person name="Bordonne R."/>
            <person name="Boyer J."/>
            <person name="Camasses A."/>
            <person name="Casamayor A."/>
            <person name="Casas C."/>
            <person name="Cheret G."/>
            <person name="Cziepluch C."/>
            <person name="Daignan-Fornier B."/>
            <person name="Dang V.-D."/>
            <person name="de Haan M."/>
            <person name="Delius H."/>
            <person name="Durand P."/>
            <person name="Fairhead C."/>
            <person name="Feldmann H."/>
            <person name="Gaillon L."/>
            <person name="Galisson F."/>
            <person name="Gamo F.-J."/>
            <person name="Gancedo C."/>
            <person name="Goffeau A."/>
            <person name="Goulding S.E."/>
            <person name="Grivell L.A."/>
            <person name="Habbig B."/>
            <person name="Hand N.J."/>
            <person name="Hani J."/>
            <person name="Hattenhorst U."/>
            <person name="Hebling U."/>
            <person name="Hernando Y."/>
            <person name="Herrero E."/>
            <person name="Heumann K."/>
            <person name="Hiesel R."/>
            <person name="Hilger F."/>
            <person name="Hofmann B."/>
            <person name="Hollenberg C.P."/>
            <person name="Hughes B."/>
            <person name="Jauniaux J.-C."/>
            <person name="Kalogeropoulos A."/>
            <person name="Katsoulou C."/>
            <person name="Kordes E."/>
            <person name="Lafuente M.J."/>
            <person name="Landt O."/>
            <person name="Louis E.J."/>
            <person name="Maarse A.C."/>
            <person name="Madania A."/>
            <person name="Mannhaupt G."/>
            <person name="Marck C."/>
            <person name="Martin R.P."/>
            <person name="Mewes H.-W."/>
            <person name="Michaux G."/>
            <person name="Paces V."/>
            <person name="Parle-McDermott A.G."/>
            <person name="Pearson B.M."/>
            <person name="Perrin A."/>
            <person name="Pettersson B."/>
            <person name="Poch O."/>
            <person name="Pohl T.M."/>
            <person name="Poirey R."/>
            <person name="Portetelle D."/>
            <person name="Pujol A."/>
            <person name="Purnelle B."/>
            <person name="Ramezani Rad M."/>
            <person name="Rechmann S."/>
            <person name="Schwager C."/>
            <person name="Schweizer M."/>
            <person name="Sor F."/>
            <person name="Sterky F."/>
            <person name="Tarassov I.A."/>
            <person name="Teodoru C."/>
            <person name="Tettelin H."/>
            <person name="Thierry A."/>
            <person name="Tobiasch E."/>
            <person name="Tzermia M."/>
            <person name="Uhlen M."/>
            <person name="Unseld M."/>
            <person name="Valens M."/>
            <person name="Vandenbol M."/>
            <person name="Vetter I."/>
            <person name="Vlcek C."/>
            <person name="Voet M."/>
            <person name="Volckaert G."/>
            <person name="Voss H."/>
            <person name="Wambutt R."/>
            <person name="Wedler H."/>
            <person name="Wiemann S."/>
            <person name="Winsor B."/>
            <person name="Wolfe K.H."/>
            <person name="Zollner A."/>
            <person name="Zumstein E."/>
            <person name="Kleine K."/>
        </authorList>
    </citation>
    <scope>NUCLEOTIDE SEQUENCE [LARGE SCALE GENOMIC DNA]</scope>
    <source>
        <strain>ATCC 204508 / S288c</strain>
    </source>
</reference>
<reference key="4">
    <citation type="journal article" date="2014" name="G3 (Bethesda)">
        <title>The reference genome sequence of Saccharomyces cerevisiae: Then and now.</title>
        <authorList>
            <person name="Engel S.R."/>
            <person name="Dietrich F.S."/>
            <person name="Fisk D.G."/>
            <person name="Binkley G."/>
            <person name="Balakrishnan R."/>
            <person name="Costanzo M.C."/>
            <person name="Dwight S.S."/>
            <person name="Hitz B.C."/>
            <person name="Karra K."/>
            <person name="Nash R.S."/>
            <person name="Weng S."/>
            <person name="Wong E.D."/>
            <person name="Lloyd P."/>
            <person name="Skrzypek M.S."/>
            <person name="Miyasato S.R."/>
            <person name="Simison M."/>
            <person name="Cherry J.M."/>
        </authorList>
    </citation>
    <scope>GENOME REANNOTATION</scope>
    <source>
        <strain>ATCC 204508 / S288c</strain>
    </source>
</reference>
<reference key="5">
    <citation type="journal article" date="1997" name="Mol. Cell. Biol.">
        <title>Molecular genetic analysis of Rts1p, a B' regulatory subunit of Saccharomyces cerevisiae protein phosphatase 2A.</title>
        <authorList>
            <person name="Shu Y."/>
            <person name="Yang H."/>
            <person name="Hallberg E."/>
            <person name="Hallberg R."/>
        </authorList>
    </citation>
    <scope>FUNCTION</scope>
    <scope>SUBUNIT</scope>
    <scope>PHOSPHORYLATION</scope>
</reference>
<reference key="6">
    <citation type="journal article" date="2003" name="Nature">
        <title>Global analysis of protein expression in yeast.</title>
        <authorList>
            <person name="Ghaemmaghami S."/>
            <person name="Huh W.-K."/>
            <person name="Bower K."/>
            <person name="Howson R.W."/>
            <person name="Belle A."/>
            <person name="Dephoure N."/>
            <person name="O'Shea E.K."/>
            <person name="Weissman J.S."/>
        </authorList>
    </citation>
    <scope>LEVEL OF PROTEIN EXPRESSION [LARGE SCALE ANALYSIS]</scope>
</reference>
<reference key="7">
    <citation type="journal article" date="2007" name="J. Proteome Res.">
        <title>Large-scale phosphorylation analysis of alpha-factor-arrested Saccharomyces cerevisiae.</title>
        <authorList>
            <person name="Li X."/>
            <person name="Gerber S.A."/>
            <person name="Rudner A.D."/>
            <person name="Beausoleil S.A."/>
            <person name="Haas W."/>
            <person name="Villen J."/>
            <person name="Elias J.E."/>
            <person name="Gygi S.P."/>
        </authorList>
    </citation>
    <scope>PHOSPHORYLATION [LARGE SCALE ANALYSIS] AT THR-242</scope>
    <scope>IDENTIFICATION BY MASS SPECTROMETRY [LARGE SCALE ANALYSIS]</scope>
    <source>
        <strain>ADR376</strain>
    </source>
</reference>
<reference key="8">
    <citation type="journal article" date="2007" name="Proc. Natl. Acad. Sci. U.S.A.">
        <title>Analysis of phosphorylation sites on proteins from Saccharomyces cerevisiae by electron transfer dissociation (ETD) mass spectrometry.</title>
        <authorList>
            <person name="Chi A."/>
            <person name="Huttenhower C."/>
            <person name="Geer L.Y."/>
            <person name="Coon J.J."/>
            <person name="Syka J.E.P."/>
            <person name="Bai D.L."/>
            <person name="Shabanowitz J."/>
            <person name="Burke D.J."/>
            <person name="Troyanskaya O.G."/>
            <person name="Hunt D.F."/>
        </authorList>
    </citation>
    <scope>IDENTIFICATION BY MASS SPECTROMETRY [LARGE SCALE ANALYSIS]</scope>
</reference>
<reference key="9">
    <citation type="journal article" date="2008" name="Mol. Cell. Proteomics">
        <title>A multidimensional chromatography technology for in-depth phosphoproteome analysis.</title>
        <authorList>
            <person name="Albuquerque C.P."/>
            <person name="Smolka M.B."/>
            <person name="Payne S.H."/>
            <person name="Bafna V."/>
            <person name="Eng J."/>
            <person name="Zhou H."/>
        </authorList>
    </citation>
    <scope>PHOSPHORYLATION [LARGE SCALE ANALYSIS] AT THR-257</scope>
    <scope>IDENTIFICATION BY MASS SPECTROMETRY [LARGE SCALE ANALYSIS]</scope>
</reference>
<comment type="function">
    <text evidence="4">The B regulatory subunit might modulate substrate selectivity and catalytic activity, and might also direct the localization of the catalytic enzyme to a particular subcellular compartment.</text>
</comment>
<comment type="function">
    <text evidence="4">Multicopy suppressor of ROX3 and HSP60.</text>
</comment>
<comment type="subunit">
    <text evidence="4">PP2A consists of a common heterodimeric core enzyme, composed of a 36 kDa catalytic subunit (subunit C) and a 65 kDa constant regulatory subunit (PR65 or subunit A), that associates with a variety of regulatory subunits. Proteins that associate with the core dimer include three families of regulatory subunits B (the R2/B/PR55/B55, R3/B''/PR72/PR130/PR59 and R5/B'/B56 families), the 48 kDa variable regulatory subunit, viral proteins, and cell signaling molecules.</text>
</comment>
<comment type="subcellular location">
    <subcellularLocation>
        <location evidence="3">Cytoplasm</location>
    </subcellularLocation>
    <subcellularLocation>
        <location evidence="3">Nucleus</location>
    </subcellularLocation>
</comment>
<comment type="miscellaneous">
    <text evidence="2">Present with 300 molecules/cell in log phase SD medium.</text>
</comment>
<comment type="similarity">
    <text evidence="5">Belongs to the phosphatase 2A regulatory subunit B family.</text>
</comment>
<gene>
    <name type="primary">RTS1</name>
    <name type="synonym">SCS1</name>
    <name type="ordered locus">YOR014W</name>
    <name type="ORF">OR26.04</name>
</gene>
<proteinExistence type="evidence at protein level"/>
<name>2A5D_YEAST</name>
<keyword id="KW-0963">Cytoplasm</keyword>
<keyword id="KW-0539">Nucleus</keyword>
<keyword id="KW-0597">Phosphoprotein</keyword>
<keyword id="KW-1185">Reference proteome</keyword>
<dbReference type="EMBL" id="U06630">
    <property type="protein sequence ID" value="AAB38372.1"/>
    <property type="molecule type" value="Genomic_DNA"/>
</dbReference>
<dbReference type="EMBL" id="S79635">
    <property type="protein sequence ID" value="AAB35312.1"/>
    <property type="molecule type" value="Genomic_DNA"/>
</dbReference>
<dbReference type="EMBL" id="X87331">
    <property type="protein sequence ID" value="CAA60763.1"/>
    <property type="molecule type" value="Genomic_DNA"/>
</dbReference>
<dbReference type="EMBL" id="Z74922">
    <property type="protein sequence ID" value="CAA99203.1"/>
    <property type="molecule type" value="Genomic_DNA"/>
</dbReference>
<dbReference type="EMBL" id="BK006948">
    <property type="protein sequence ID" value="DAA10797.1"/>
    <property type="molecule type" value="Genomic_DNA"/>
</dbReference>
<dbReference type="PIR" id="S54620">
    <property type="entry name" value="S54620"/>
</dbReference>
<dbReference type="RefSeq" id="NP_014657.1">
    <property type="nucleotide sequence ID" value="NM_001183433.1"/>
</dbReference>
<dbReference type="SMR" id="P38903"/>
<dbReference type="BioGRID" id="34419">
    <property type="interactions" value="470"/>
</dbReference>
<dbReference type="ComplexPortal" id="CPX-1857">
    <property type="entry name" value="Serine/threonine-protein phosphatase PP2A variant 2"/>
</dbReference>
<dbReference type="ComplexPortal" id="CPX-1858">
    <property type="entry name" value="Serine/threonine-protein phosphatase PP2A variant 4"/>
</dbReference>
<dbReference type="DIP" id="DIP-4191N"/>
<dbReference type="FunCoup" id="P38903">
    <property type="interactions" value="856"/>
</dbReference>
<dbReference type="IntAct" id="P38903">
    <property type="interactions" value="55"/>
</dbReference>
<dbReference type="MINT" id="P38903"/>
<dbReference type="STRING" id="4932.YOR014W"/>
<dbReference type="GlyGen" id="P38903">
    <property type="glycosylation" value="1 site, 1 O-linked glycan (1 site)"/>
</dbReference>
<dbReference type="iPTMnet" id="P38903"/>
<dbReference type="PaxDb" id="4932-YOR014W"/>
<dbReference type="PeptideAtlas" id="P38903"/>
<dbReference type="EnsemblFungi" id="YOR014W_mRNA">
    <property type="protein sequence ID" value="YOR014W"/>
    <property type="gene ID" value="YOR014W"/>
</dbReference>
<dbReference type="GeneID" id="854179"/>
<dbReference type="KEGG" id="sce:YOR014W"/>
<dbReference type="AGR" id="SGD:S000005540"/>
<dbReference type="SGD" id="S000005540">
    <property type="gene designation" value="RTS1"/>
</dbReference>
<dbReference type="VEuPathDB" id="FungiDB:YOR014W"/>
<dbReference type="eggNOG" id="KOG2085">
    <property type="taxonomic scope" value="Eukaryota"/>
</dbReference>
<dbReference type="GeneTree" id="ENSGT01030000234620"/>
<dbReference type="HOGENOM" id="CLU_012437_1_0_1"/>
<dbReference type="InParanoid" id="P38903"/>
<dbReference type="OMA" id="MYAHVVN"/>
<dbReference type="OrthoDB" id="10264446at2759"/>
<dbReference type="BioCyc" id="YEAST:G3O-33563-MONOMER"/>
<dbReference type="Reactome" id="R-SCE-198753">
    <property type="pathway name" value="ERK/MAPK targets"/>
</dbReference>
<dbReference type="Reactome" id="R-SCE-202670">
    <property type="pathway name" value="ERKs are inactivated"/>
</dbReference>
<dbReference type="Reactome" id="R-SCE-389513">
    <property type="pathway name" value="Co-inhibition by CTLA4"/>
</dbReference>
<dbReference type="Reactome" id="R-SCE-6811558">
    <property type="pathway name" value="PI5P, PP2A and IER3 Regulate PI3K/AKT Signaling"/>
</dbReference>
<dbReference type="BioGRID-ORCS" id="854179">
    <property type="hits" value="8 hits in 10 CRISPR screens"/>
</dbReference>
<dbReference type="CD-CODE" id="876000F7">
    <property type="entry name" value="Centrosome"/>
</dbReference>
<dbReference type="PRO" id="PR:P38903"/>
<dbReference type="Proteomes" id="UP000002311">
    <property type="component" value="Chromosome XV"/>
</dbReference>
<dbReference type="RNAct" id="P38903">
    <property type="molecule type" value="protein"/>
</dbReference>
<dbReference type="GO" id="GO:0005935">
    <property type="term" value="C:cellular bud neck"/>
    <property type="evidence" value="ECO:0000314"/>
    <property type="project" value="SGD"/>
</dbReference>
<dbReference type="GO" id="GO:0005737">
    <property type="term" value="C:cytoplasm"/>
    <property type="evidence" value="ECO:0007005"/>
    <property type="project" value="SGD"/>
</dbReference>
<dbReference type="GO" id="GO:0000776">
    <property type="term" value="C:kinetochore"/>
    <property type="evidence" value="ECO:0000314"/>
    <property type="project" value="SGD"/>
</dbReference>
<dbReference type="GO" id="GO:0005634">
    <property type="term" value="C:nucleus"/>
    <property type="evidence" value="ECO:0000314"/>
    <property type="project" value="SGD"/>
</dbReference>
<dbReference type="GO" id="GO:0000159">
    <property type="term" value="C:protein phosphatase type 2A complex"/>
    <property type="evidence" value="ECO:0000353"/>
    <property type="project" value="ComplexPortal"/>
</dbReference>
<dbReference type="GO" id="GO:0005816">
    <property type="term" value="C:spindle pole body"/>
    <property type="evidence" value="ECO:0000314"/>
    <property type="project" value="SGD"/>
</dbReference>
<dbReference type="GO" id="GO:0003677">
    <property type="term" value="F:DNA binding"/>
    <property type="evidence" value="ECO:0000314"/>
    <property type="project" value="SGD"/>
</dbReference>
<dbReference type="GO" id="GO:0072542">
    <property type="term" value="F:protein phosphatase activator activity"/>
    <property type="evidence" value="ECO:0000318"/>
    <property type="project" value="GO_Central"/>
</dbReference>
<dbReference type="GO" id="GO:0019888">
    <property type="term" value="F:protein phosphatase regulator activity"/>
    <property type="evidence" value="ECO:0000314"/>
    <property type="project" value="SGD"/>
</dbReference>
<dbReference type="GO" id="GO:0032186">
    <property type="term" value="P:cellular bud neck septin ring organization"/>
    <property type="evidence" value="ECO:0000315"/>
    <property type="project" value="SGD"/>
</dbReference>
<dbReference type="GO" id="GO:0006281">
    <property type="term" value="P:DNA repair"/>
    <property type="evidence" value="ECO:0000315"/>
    <property type="project" value="SGD"/>
</dbReference>
<dbReference type="GO" id="GO:0070199">
    <property type="term" value="P:establishment of protein localization to chromosome"/>
    <property type="evidence" value="ECO:0000315"/>
    <property type="project" value="SGD"/>
</dbReference>
<dbReference type="GO" id="GO:0051177">
    <property type="term" value="P:meiotic sister chromatid cohesion"/>
    <property type="evidence" value="ECO:0000318"/>
    <property type="project" value="GO_Central"/>
</dbReference>
<dbReference type="GO" id="GO:0051754">
    <property type="term" value="P:meiotic sister chromatid cohesion, centromeric"/>
    <property type="evidence" value="ECO:0000315"/>
    <property type="project" value="SGD"/>
</dbReference>
<dbReference type="GO" id="GO:0031578">
    <property type="term" value="P:mitotic spindle orientation checkpoint signaling"/>
    <property type="evidence" value="ECO:0000316"/>
    <property type="project" value="SGD"/>
</dbReference>
<dbReference type="GO" id="GO:2000786">
    <property type="term" value="P:positive regulation of autophagosome assembly"/>
    <property type="evidence" value="ECO:0000316"/>
    <property type="project" value="SGD"/>
</dbReference>
<dbReference type="GO" id="GO:0008104">
    <property type="term" value="P:protein localization"/>
    <property type="evidence" value="ECO:0000315"/>
    <property type="project" value="SGD"/>
</dbReference>
<dbReference type="GO" id="GO:0031107">
    <property type="term" value="P:septin ring disassembly"/>
    <property type="evidence" value="ECO:0000315"/>
    <property type="project" value="SGD"/>
</dbReference>
<dbReference type="GO" id="GO:0031134">
    <property type="term" value="P:sister chromatid biorientation"/>
    <property type="evidence" value="ECO:0000316"/>
    <property type="project" value="SGD"/>
</dbReference>
<dbReference type="FunFam" id="1.25.10.10:FF:000016">
    <property type="entry name" value="Serine/threonine-protein phosphatase 2A 56 kDa regulatory subunit"/>
    <property type="match status" value="1"/>
</dbReference>
<dbReference type="Gene3D" id="1.25.10.10">
    <property type="entry name" value="Leucine-rich Repeat Variant"/>
    <property type="match status" value="1"/>
</dbReference>
<dbReference type="InterPro" id="IPR011989">
    <property type="entry name" value="ARM-like"/>
</dbReference>
<dbReference type="InterPro" id="IPR016024">
    <property type="entry name" value="ARM-type_fold"/>
</dbReference>
<dbReference type="InterPro" id="IPR002554">
    <property type="entry name" value="PP2A_B56"/>
</dbReference>
<dbReference type="PANTHER" id="PTHR10257">
    <property type="entry name" value="SERINE/THREONINE PROTEIN PHOSPHATASE 2A PP2A REGULATORY SUBUNIT B"/>
    <property type="match status" value="1"/>
</dbReference>
<dbReference type="PANTHER" id="PTHR10257:SF3">
    <property type="entry name" value="SERINE_THREONINE-PROTEIN PHOSPHATASE 2A 56 KDA REGULATORY SUBUNIT GAMMA ISOFORM"/>
    <property type="match status" value="1"/>
</dbReference>
<dbReference type="Pfam" id="PF01603">
    <property type="entry name" value="B56"/>
    <property type="match status" value="1"/>
</dbReference>
<dbReference type="PIRSF" id="PIRSF028043">
    <property type="entry name" value="PP2A_B56"/>
    <property type="match status" value="1"/>
</dbReference>
<dbReference type="SUPFAM" id="SSF48371">
    <property type="entry name" value="ARM repeat"/>
    <property type="match status" value="1"/>
</dbReference>
<accession>P38903</accession>
<accession>D6W281</accession>
<evidence type="ECO:0000256" key="1">
    <source>
        <dbReference type="SAM" id="MobiDB-lite"/>
    </source>
</evidence>
<evidence type="ECO:0000269" key="2">
    <source>
    </source>
</evidence>
<evidence type="ECO:0000269" key="3">
    <source>
    </source>
</evidence>
<evidence type="ECO:0000269" key="4">
    <source>
    </source>
</evidence>
<evidence type="ECO:0000305" key="5"/>
<evidence type="ECO:0007744" key="6">
    <source>
    </source>
</evidence>
<evidence type="ECO:0007744" key="7">
    <source>
    </source>
</evidence>